<sequence length="158" mass="16923">MKPRHRRLTLIALVLGGLGLSAGLALTAFQDNLVFFFTPSEVMAREAPIDRPIRIGGLVKAGSVEREAASARVHFKVTDTAESITVSYDGILPDLFREGQGVVAQGRLGADGRFHATQVLARHDETYMPAEAKEALDRIGQGNGTPGPDGHPETTTAY</sequence>
<proteinExistence type="inferred from homology"/>
<protein>
    <recommendedName>
        <fullName evidence="1">Cytochrome c-type biogenesis protein CcmE</fullName>
    </recommendedName>
    <alternativeName>
        <fullName evidence="1">Cytochrome c maturation protein E</fullName>
    </alternativeName>
    <alternativeName>
        <fullName evidence="1">Heme chaperone CcmE</fullName>
    </alternativeName>
</protein>
<reference key="1">
    <citation type="submission" date="2006-08" db="EMBL/GenBank/DDBJ databases">
        <title>Complete sequence of Alkalilimnicola ehrilichei MLHE-1.</title>
        <authorList>
            <person name="Copeland A."/>
            <person name="Lucas S."/>
            <person name="Lapidus A."/>
            <person name="Barry K."/>
            <person name="Detter J.C."/>
            <person name="Glavina del Rio T."/>
            <person name="Hammon N."/>
            <person name="Israni S."/>
            <person name="Dalin E."/>
            <person name="Tice H."/>
            <person name="Pitluck S."/>
            <person name="Sims D."/>
            <person name="Brettin T."/>
            <person name="Bruce D."/>
            <person name="Han C."/>
            <person name="Tapia R."/>
            <person name="Gilna P."/>
            <person name="Schmutz J."/>
            <person name="Larimer F."/>
            <person name="Land M."/>
            <person name="Hauser L."/>
            <person name="Kyrpides N."/>
            <person name="Mikhailova N."/>
            <person name="Oremland R.S."/>
            <person name="Hoeft S.E."/>
            <person name="Switzer-Blum J."/>
            <person name="Kulp T."/>
            <person name="King G."/>
            <person name="Tabita R."/>
            <person name="Witte B."/>
            <person name="Santini J.M."/>
            <person name="Basu P."/>
            <person name="Hollibaugh J.T."/>
            <person name="Xie G."/>
            <person name="Stolz J.F."/>
            <person name="Richardson P."/>
        </authorList>
    </citation>
    <scope>NUCLEOTIDE SEQUENCE [LARGE SCALE GENOMIC DNA]</scope>
    <source>
        <strain>ATCC BAA-1101 / DSM 17681 / MLHE-1</strain>
    </source>
</reference>
<keyword id="KW-0997">Cell inner membrane</keyword>
<keyword id="KW-1003">Cell membrane</keyword>
<keyword id="KW-0201">Cytochrome c-type biogenesis</keyword>
<keyword id="KW-0349">Heme</keyword>
<keyword id="KW-0408">Iron</keyword>
<keyword id="KW-0472">Membrane</keyword>
<keyword id="KW-0479">Metal-binding</keyword>
<keyword id="KW-1185">Reference proteome</keyword>
<keyword id="KW-0735">Signal-anchor</keyword>
<keyword id="KW-0812">Transmembrane</keyword>
<keyword id="KW-1133">Transmembrane helix</keyword>
<accession>Q0A805</accession>
<organism>
    <name type="scientific">Alkalilimnicola ehrlichii (strain ATCC BAA-1101 / DSM 17681 / MLHE-1)</name>
    <dbReference type="NCBI Taxonomy" id="187272"/>
    <lineage>
        <taxon>Bacteria</taxon>
        <taxon>Pseudomonadati</taxon>
        <taxon>Pseudomonadota</taxon>
        <taxon>Gammaproteobacteria</taxon>
        <taxon>Chromatiales</taxon>
        <taxon>Ectothiorhodospiraceae</taxon>
        <taxon>Alkalilimnicola</taxon>
    </lineage>
</organism>
<evidence type="ECO:0000255" key="1">
    <source>
        <dbReference type="HAMAP-Rule" id="MF_01959"/>
    </source>
</evidence>
<evidence type="ECO:0000256" key="2">
    <source>
        <dbReference type="SAM" id="MobiDB-lite"/>
    </source>
</evidence>
<comment type="function">
    <text evidence="1">Heme chaperone required for the biogenesis of c-type cytochromes. Transiently binds heme delivered by CcmC and transfers the heme to apo-cytochromes in a process facilitated by CcmF and CcmH.</text>
</comment>
<comment type="subcellular location">
    <subcellularLocation>
        <location evidence="1">Cell inner membrane</location>
        <topology evidence="1">Single-pass type II membrane protein</topology>
        <orientation evidence="1">Periplasmic side</orientation>
    </subcellularLocation>
</comment>
<comment type="similarity">
    <text evidence="1">Belongs to the CcmE/CycJ family.</text>
</comment>
<name>CCME_ALKEH</name>
<gene>
    <name evidence="1" type="primary">ccmE</name>
    <name evidence="1" type="synonym">cycJ</name>
    <name type="ordered locus">Mlg_1686</name>
</gene>
<dbReference type="EMBL" id="CP000453">
    <property type="protein sequence ID" value="ABI57032.1"/>
    <property type="molecule type" value="Genomic_DNA"/>
</dbReference>
<dbReference type="RefSeq" id="WP_011629426.1">
    <property type="nucleotide sequence ID" value="NC_008340.1"/>
</dbReference>
<dbReference type="SMR" id="Q0A805"/>
<dbReference type="KEGG" id="aeh:Mlg_1686"/>
<dbReference type="eggNOG" id="COG2332">
    <property type="taxonomic scope" value="Bacteria"/>
</dbReference>
<dbReference type="HOGENOM" id="CLU_079503_1_1_6"/>
<dbReference type="OrthoDB" id="9793584at2"/>
<dbReference type="Proteomes" id="UP000001962">
    <property type="component" value="Chromosome"/>
</dbReference>
<dbReference type="GO" id="GO:0005886">
    <property type="term" value="C:plasma membrane"/>
    <property type="evidence" value="ECO:0007669"/>
    <property type="project" value="UniProtKB-SubCell"/>
</dbReference>
<dbReference type="GO" id="GO:0020037">
    <property type="term" value="F:heme binding"/>
    <property type="evidence" value="ECO:0007669"/>
    <property type="project" value="InterPro"/>
</dbReference>
<dbReference type="GO" id="GO:0046872">
    <property type="term" value="F:metal ion binding"/>
    <property type="evidence" value="ECO:0007669"/>
    <property type="project" value="UniProtKB-KW"/>
</dbReference>
<dbReference type="GO" id="GO:0017004">
    <property type="term" value="P:cytochrome complex assembly"/>
    <property type="evidence" value="ECO:0007669"/>
    <property type="project" value="UniProtKB-KW"/>
</dbReference>
<dbReference type="FunFam" id="2.40.50.140:FF:000104">
    <property type="entry name" value="Cytochrome c-type biogenesis protein CcmE"/>
    <property type="match status" value="1"/>
</dbReference>
<dbReference type="Gene3D" id="2.40.50.140">
    <property type="entry name" value="Nucleic acid-binding proteins"/>
    <property type="match status" value="1"/>
</dbReference>
<dbReference type="HAMAP" id="MF_01959">
    <property type="entry name" value="CcmE"/>
    <property type="match status" value="1"/>
</dbReference>
<dbReference type="InterPro" id="IPR004329">
    <property type="entry name" value="CcmE"/>
</dbReference>
<dbReference type="InterPro" id="IPR036127">
    <property type="entry name" value="CcmE-like_sf"/>
</dbReference>
<dbReference type="InterPro" id="IPR012340">
    <property type="entry name" value="NA-bd_OB-fold"/>
</dbReference>
<dbReference type="NCBIfam" id="NF009727">
    <property type="entry name" value="PRK13254.1-1"/>
    <property type="match status" value="1"/>
</dbReference>
<dbReference type="NCBIfam" id="NF009729">
    <property type="entry name" value="PRK13254.1-3"/>
    <property type="match status" value="1"/>
</dbReference>
<dbReference type="NCBIfam" id="NF009731">
    <property type="entry name" value="PRK13254.1-5"/>
    <property type="match status" value="1"/>
</dbReference>
<dbReference type="PANTHER" id="PTHR34128">
    <property type="entry name" value="CYTOCHROME C-TYPE BIOGENESIS PROTEIN CCME HOMOLOG, MITOCHONDRIAL"/>
    <property type="match status" value="1"/>
</dbReference>
<dbReference type="PANTHER" id="PTHR34128:SF2">
    <property type="entry name" value="CYTOCHROME C-TYPE BIOGENESIS PROTEIN CCME HOMOLOG, MITOCHONDRIAL"/>
    <property type="match status" value="1"/>
</dbReference>
<dbReference type="Pfam" id="PF03100">
    <property type="entry name" value="CcmE"/>
    <property type="match status" value="1"/>
</dbReference>
<dbReference type="SUPFAM" id="SSF82093">
    <property type="entry name" value="Heme chaperone CcmE"/>
    <property type="match status" value="1"/>
</dbReference>
<feature type="chain" id="PRO_1000088519" description="Cytochrome c-type biogenesis protein CcmE">
    <location>
        <begin position="1"/>
        <end position="158"/>
    </location>
</feature>
<feature type="topological domain" description="Cytoplasmic" evidence="1">
    <location>
        <begin position="1"/>
        <end position="7"/>
    </location>
</feature>
<feature type="transmembrane region" description="Helical; Signal-anchor for type II membrane protein" evidence="1">
    <location>
        <begin position="8"/>
        <end position="28"/>
    </location>
</feature>
<feature type="topological domain" description="Periplasmic" evidence="1">
    <location>
        <begin position="29"/>
        <end position="158"/>
    </location>
</feature>
<feature type="region of interest" description="Disordered" evidence="2">
    <location>
        <begin position="138"/>
        <end position="158"/>
    </location>
</feature>
<feature type="binding site" description="covalent" evidence="1">
    <location>
        <position position="123"/>
    </location>
    <ligand>
        <name>heme</name>
        <dbReference type="ChEBI" id="CHEBI:30413"/>
    </ligand>
</feature>
<feature type="binding site" description="axial binding residue" evidence="1">
    <location>
        <position position="127"/>
    </location>
    <ligand>
        <name>heme</name>
        <dbReference type="ChEBI" id="CHEBI:30413"/>
    </ligand>
    <ligandPart>
        <name>Fe</name>
        <dbReference type="ChEBI" id="CHEBI:18248"/>
    </ligandPart>
</feature>